<name>TBX2_CANLF</name>
<protein>
    <recommendedName>
        <fullName>T-box transcription factor TBX2</fullName>
        <shortName>T-box protein 2</shortName>
    </recommendedName>
</protein>
<accession>Q863A2</accession>
<sequence>MREPALAASAMAYHPFHAPRPADFPMSAFLAAAQPSFFPALALPPGALAKPLPDPGLAGAAAAAAAAAAAAEAGLHVSALGPHPPAAHLRSLKSLEPEDEVEDDPKVTLEAKELWDQFHKLGTEMVITKSGRRMFPPFKVRVSGLDKKAKYILLMDIVAADDCRYKFHNSRWMVAGKADPEMPKRMYIHPDSPATGEQWMAKPVAFHKLKLTNNISDKHGFTILNSMHKYQPRFHIVRANDILKLPYSTFRTYVFPETDFIAVTAYQNDKITQLKIDNNPFAKGFRDTGNGRREKRKQLTLPSLRLYEEHCKPERDGAESDASSCDPAPAREPPASPGSAPSPLRLHRTRADEKCAADSDPEPERLSEERAGPALGRSPGLDGGSPPRLTEPERARERRSPERGKEPAESGGDGPFGLRSLEKERAEARRKDDGRKEAGEGKEPGLAPLVVQTDSASPLGAGHLPGLAFSGHLHGQQFFGPLGAGQPLFLHPGQFAMGPGAFSAMGMGHLLASVAGGGGGGGGGGPGTATGLDAGGLGPAASAASTPAPFPFHLSQHMLASQGIPMPTFGGLFPYPYTYMAAAAAAASALPATSAAAAAAAAAGSLSRSHFLGSARPRLRFSPYQIPVTIPPSTSLLTTGLAAEGSKAAGSNSREPSPLPELALRKVGAPSRGALSPSGSAKEAASELQSIQRLVSGLENQRALSPGRESPK</sequence>
<evidence type="ECO:0000250" key="1"/>
<evidence type="ECO:0000250" key="2">
    <source>
        <dbReference type="UniProtKB" id="Q13207"/>
    </source>
</evidence>
<evidence type="ECO:0000250" key="3">
    <source>
        <dbReference type="UniProtKB" id="Q60707"/>
    </source>
</evidence>
<evidence type="ECO:0000255" key="4">
    <source>
        <dbReference type="PROSITE-ProRule" id="PRU00201"/>
    </source>
</evidence>
<evidence type="ECO:0000256" key="5">
    <source>
        <dbReference type="SAM" id="MobiDB-lite"/>
    </source>
</evidence>
<evidence type="ECO:0000305" key="6"/>
<gene>
    <name type="primary">TBX2</name>
</gene>
<reference key="1">
    <citation type="submission" date="2002-12" db="EMBL/GenBank/DDBJ databases">
        <title>Molecular cloning of canine Tbx2 and Tbx4: exclusion as candidates for canine tricuspid valve malformation.</title>
        <authorList>
            <person name="Andelfinger G."/>
            <person name="Etter L."/>
            <person name="Dyment M."/>
            <person name="Hitte C."/>
            <person name="Galibert F."/>
            <person name="Kirkness E."/>
            <person name="Benson D.W."/>
        </authorList>
    </citation>
    <scope>NUCLEOTIDE SEQUENCE [GENOMIC DNA / MRNA]</scope>
</reference>
<comment type="function">
    <text evidence="2 3">Transcription factor which acts as a transcriptional repressor (By similarity). May also function as a transcriptional activator (By similarity). Binds to the palindromic T site 5'-TTCACACCTAGGTGTGAA-3' DNA sequence, or a half-site, which are present in the regulatory region of several genes. Required for cardiac atrioventricular canal formation (By similarity). May cooperate with NKX2.5 to negatively modulate expression of NPPA/ANF in the atrioventricular canal. May play a role as a positive regulator of TGFB2 expression, perhaps acting in concert with GATA4 in the developing outflow tract myocardium (By similarity). Plays a role in limb pattern formation. Acts as a transcriptional repressor of ADAM10 gene expression, perhaps in concert with histone deacetylase HDAC1 as cofactor (By similarity). Involved in branching morphogenesis in both developing lungs and adult mammary glands, via negative modulation of target genes; acting redundantly with TBX3. Required, together with TBX3, to maintain cell proliferation in the embryonic lung mesenchyme; perhaps acting downstream of SHH, BMP and TGFbeta signaling. Involved in modulating early inner ear development, acting independently of, and also redundantly with TBX3, in different subregions of the developing ear (By similarity). Acts as a negative regulator of PML function in cellular senescence (By similarity). Acts as a negative regulator of expression of CDKN1A/p21, IL33 and CCN4; repression of CDKN1A is enhanced in response to UV-induced stress, perhaps as a result of phosphorylation by p38 MAPK (By similarity). Negatively modulates expression of CDKN2A/p14ARF and CDH1/E-cadherin. Plays a role in induction of the epithelial-mesenchymal transition (EMT) (By similarity). Plays a role in melanocyte proliferation, perhaps via regulation of cyclin CCND1. Involved in melanogenesis, acting via negative modulation of expression of DHICA oxidase/TYRP1 and P protein/OCA2 (By similarity). Involved in regulating retinal pigment epithelium (RPE) cell proliferation, perhaps via negatively modulating transcription of the transcription factor CEBPD (By similarity).</text>
</comment>
<comment type="subunit">
    <text evidence="2">Binds DNA as a monomer. Interacts with PML (isoform PML-2, isoform PML-3 and isoform PML-4).</text>
</comment>
<comment type="subcellular location">
    <subcellularLocation>
        <location evidence="2">Nucleus</location>
    </subcellularLocation>
</comment>
<comment type="domain">
    <text evidence="2">Repression domain 1 (RD1) is involved in transcriptional repression. RD1 is necessary for its interaction with PML.</text>
</comment>
<comment type="sequence caution" evidence="6">
    <conflict type="erroneous initiation">
        <sequence resource="EMBL-CDS" id="AAO24699"/>
    </conflict>
    <text>Truncated N-terminus.</text>
</comment>
<keyword id="KW-0217">Developmental protein</keyword>
<keyword id="KW-0238">DNA-binding</keyword>
<keyword id="KW-0539">Nucleus</keyword>
<keyword id="KW-0597">Phosphoprotein</keyword>
<keyword id="KW-1185">Reference proteome</keyword>
<keyword id="KW-0804">Transcription</keyword>
<keyword id="KW-0805">Transcription regulation</keyword>
<proteinExistence type="inferred from homology"/>
<feature type="chain" id="PRO_0000184425" description="T-box transcription factor TBX2">
    <location>
        <begin position="1"/>
        <end position="712"/>
    </location>
</feature>
<feature type="DNA-binding region" description="T-box" evidence="4">
    <location>
        <begin position="109"/>
        <end position="287"/>
    </location>
</feature>
<feature type="region of interest" description="Disordered" evidence="5">
    <location>
        <begin position="313"/>
        <end position="449"/>
    </location>
</feature>
<feature type="region of interest" description="Repression domain 1 (RD1)" evidence="1">
    <location>
        <begin position="517"/>
        <end position="601"/>
    </location>
</feature>
<feature type="region of interest" description="Disordered" evidence="5">
    <location>
        <begin position="642"/>
        <end position="661"/>
    </location>
</feature>
<feature type="region of interest" description="Disordered" evidence="5">
    <location>
        <begin position="666"/>
        <end position="688"/>
    </location>
</feature>
<feature type="compositionally biased region" description="Basic and acidic residues" evidence="5">
    <location>
        <begin position="349"/>
        <end position="371"/>
    </location>
</feature>
<feature type="compositionally biased region" description="Basic and acidic residues" evidence="5">
    <location>
        <begin position="390"/>
        <end position="408"/>
    </location>
</feature>
<feature type="compositionally biased region" description="Basic and acidic residues" evidence="5">
    <location>
        <begin position="420"/>
        <end position="443"/>
    </location>
</feature>
<feature type="modified residue" description="Phosphoserine" evidence="3">
    <location>
        <position position="336"/>
    </location>
</feature>
<feature type="modified residue" description="Phosphoserine" evidence="3">
    <location>
        <position position="342"/>
    </location>
</feature>
<feature type="modified residue" description="Phosphoserine" evidence="3">
    <location>
        <position position="359"/>
    </location>
</feature>
<feature type="modified residue" description="Phosphoserine" evidence="3">
    <location>
        <position position="622"/>
    </location>
</feature>
<feature type="modified residue" description="Phosphoserine" evidence="2">
    <location>
        <position position="653"/>
    </location>
</feature>
<feature type="modified residue" description="Phosphoserine" evidence="2">
    <location>
        <position position="657"/>
    </location>
</feature>
<feature type="modified residue" description="Phosphoserine" evidence="3">
    <location>
        <position position="676"/>
    </location>
</feature>
<organism>
    <name type="scientific">Canis lupus familiaris</name>
    <name type="common">Dog</name>
    <name type="synonym">Canis familiaris</name>
    <dbReference type="NCBI Taxonomy" id="9615"/>
    <lineage>
        <taxon>Eukaryota</taxon>
        <taxon>Metazoa</taxon>
        <taxon>Chordata</taxon>
        <taxon>Craniata</taxon>
        <taxon>Vertebrata</taxon>
        <taxon>Euteleostomi</taxon>
        <taxon>Mammalia</taxon>
        <taxon>Eutheria</taxon>
        <taxon>Laurasiatheria</taxon>
        <taxon>Carnivora</taxon>
        <taxon>Caniformia</taxon>
        <taxon>Canidae</taxon>
        <taxon>Canis</taxon>
    </lineage>
</organism>
<dbReference type="EMBL" id="AY192802">
    <property type="protein sequence ID" value="AAO24699.1"/>
    <property type="status" value="ALT_INIT"/>
    <property type="molecule type" value="Genomic_DNA"/>
</dbReference>
<dbReference type="EMBL" id="AY192798">
    <property type="protein sequence ID" value="AAO24699.1"/>
    <property type="status" value="JOINED"/>
    <property type="molecule type" value="Genomic_DNA"/>
</dbReference>
<dbReference type="EMBL" id="AY192799">
    <property type="protein sequence ID" value="AAO24699.1"/>
    <property type="status" value="JOINED"/>
    <property type="molecule type" value="Genomic_DNA"/>
</dbReference>
<dbReference type="EMBL" id="AY192800">
    <property type="protein sequence ID" value="AAO24699.1"/>
    <property type="status" value="JOINED"/>
    <property type="molecule type" value="Genomic_DNA"/>
</dbReference>
<dbReference type="EMBL" id="AY192801">
    <property type="protein sequence ID" value="AAO24699.1"/>
    <property type="status" value="JOINED"/>
    <property type="molecule type" value="Genomic_DNA"/>
</dbReference>
<dbReference type="RefSeq" id="XP_038403914.1">
    <property type="nucleotide sequence ID" value="XM_038547986.1"/>
</dbReference>
<dbReference type="RefSeq" id="XP_038464272.1">
    <property type="nucleotide sequence ID" value="XM_038608344.1"/>
</dbReference>
<dbReference type="RefSeq" id="XP_038533125.1">
    <property type="nucleotide sequence ID" value="XM_038677197.1"/>
</dbReference>
<dbReference type="SMR" id="Q863A2"/>
<dbReference type="FunCoup" id="Q863A2">
    <property type="interactions" value="21"/>
</dbReference>
<dbReference type="STRING" id="9615.ENSCAFP00000037090"/>
<dbReference type="PaxDb" id="9615-ENSCAFP00000037090"/>
<dbReference type="Ensembl" id="ENSCAFT00000049492.4">
    <property type="protein sequence ID" value="ENSCAFP00000037090.2"/>
    <property type="gene ID" value="ENSCAFG00000017745.6"/>
</dbReference>
<dbReference type="Ensembl" id="ENSCAFT00030045972.1">
    <property type="protein sequence ID" value="ENSCAFP00030040164.1"/>
    <property type="gene ID" value="ENSCAFG00030024923.1"/>
</dbReference>
<dbReference type="Ensembl" id="ENSCAFT00845048190.1">
    <property type="protein sequence ID" value="ENSCAFP00845037798.1"/>
    <property type="gene ID" value="ENSCAFG00845027360.1"/>
</dbReference>
<dbReference type="GeneID" id="448779"/>
<dbReference type="VEuPathDB" id="HostDB:ENSCAFG00845027360"/>
<dbReference type="VGNC" id="VGNC:47171">
    <property type="gene designation" value="TBX2"/>
</dbReference>
<dbReference type="GeneTree" id="ENSGT00940000158439"/>
<dbReference type="InParanoid" id="Q863A2"/>
<dbReference type="OrthoDB" id="7442607at2759"/>
<dbReference type="Proteomes" id="UP000002254">
    <property type="component" value="Chromosome 9"/>
</dbReference>
<dbReference type="Proteomes" id="UP000694429">
    <property type="component" value="Chromosome 9"/>
</dbReference>
<dbReference type="Proteomes" id="UP000694542">
    <property type="component" value="Unplaced"/>
</dbReference>
<dbReference type="Proteomes" id="UP000805418">
    <property type="component" value="Chromosome 9"/>
</dbReference>
<dbReference type="GO" id="GO:0005737">
    <property type="term" value="C:cytoplasm"/>
    <property type="evidence" value="ECO:0007669"/>
    <property type="project" value="Ensembl"/>
</dbReference>
<dbReference type="GO" id="GO:0005634">
    <property type="term" value="C:nucleus"/>
    <property type="evidence" value="ECO:0000250"/>
    <property type="project" value="UniProtKB"/>
</dbReference>
<dbReference type="GO" id="GO:0005667">
    <property type="term" value="C:transcription regulator complex"/>
    <property type="evidence" value="ECO:0007669"/>
    <property type="project" value="Ensembl"/>
</dbReference>
<dbReference type="GO" id="GO:0140297">
    <property type="term" value="F:DNA-binding transcription factor binding"/>
    <property type="evidence" value="ECO:0007669"/>
    <property type="project" value="Ensembl"/>
</dbReference>
<dbReference type="GO" id="GO:0001227">
    <property type="term" value="F:DNA-binding transcription repressor activity, RNA polymerase II-specific"/>
    <property type="evidence" value="ECO:0007669"/>
    <property type="project" value="Ensembl"/>
</dbReference>
<dbReference type="GO" id="GO:0042826">
    <property type="term" value="F:histone deacetylase binding"/>
    <property type="evidence" value="ECO:0007669"/>
    <property type="project" value="Ensembl"/>
</dbReference>
<dbReference type="GO" id="GO:0000978">
    <property type="term" value="F:RNA polymerase II cis-regulatory region sequence-specific DNA binding"/>
    <property type="evidence" value="ECO:0007669"/>
    <property type="project" value="Ensembl"/>
</dbReference>
<dbReference type="GO" id="GO:0035909">
    <property type="term" value="P:aorta morphogenesis"/>
    <property type="evidence" value="ECO:0007669"/>
    <property type="project" value="Ensembl"/>
</dbReference>
<dbReference type="GO" id="GO:0006915">
    <property type="term" value="P:apoptotic process"/>
    <property type="evidence" value="ECO:0007669"/>
    <property type="project" value="Ensembl"/>
</dbReference>
<dbReference type="GO" id="GO:1905222">
    <property type="term" value="P:atrioventricular canal morphogenesis"/>
    <property type="evidence" value="ECO:0007669"/>
    <property type="project" value="Ensembl"/>
</dbReference>
<dbReference type="GO" id="GO:1905072">
    <property type="term" value="P:cardiac jelly development"/>
    <property type="evidence" value="ECO:0007669"/>
    <property type="project" value="Ensembl"/>
</dbReference>
<dbReference type="GO" id="GO:0060379">
    <property type="term" value="P:cardiac muscle cell myoblast differentiation"/>
    <property type="evidence" value="ECO:0007669"/>
    <property type="project" value="Ensembl"/>
</dbReference>
<dbReference type="GO" id="GO:0048738">
    <property type="term" value="P:cardiac muscle tissue development"/>
    <property type="evidence" value="ECO:0007669"/>
    <property type="project" value="Ensembl"/>
</dbReference>
<dbReference type="GO" id="GO:0090398">
    <property type="term" value="P:cellular senescence"/>
    <property type="evidence" value="ECO:0000250"/>
    <property type="project" value="UniProtKB"/>
</dbReference>
<dbReference type="GO" id="GO:0090103">
    <property type="term" value="P:cochlea morphogenesis"/>
    <property type="evidence" value="ECO:0007669"/>
    <property type="project" value="Ensembl"/>
</dbReference>
<dbReference type="GO" id="GO:0060560">
    <property type="term" value="P:developmental growth involved in morphogenesis"/>
    <property type="evidence" value="ECO:0007669"/>
    <property type="project" value="Ensembl"/>
</dbReference>
<dbReference type="GO" id="GO:0048596">
    <property type="term" value="P:embryonic camera-type eye morphogenesis"/>
    <property type="evidence" value="ECO:0007669"/>
    <property type="project" value="Ensembl"/>
</dbReference>
<dbReference type="GO" id="GO:0042733">
    <property type="term" value="P:embryonic digit morphogenesis"/>
    <property type="evidence" value="ECO:0007669"/>
    <property type="project" value="Ensembl"/>
</dbReference>
<dbReference type="GO" id="GO:0035050">
    <property type="term" value="P:embryonic heart tube development"/>
    <property type="evidence" value="ECO:0000250"/>
    <property type="project" value="UniProtKB"/>
</dbReference>
<dbReference type="GO" id="GO:0003272">
    <property type="term" value="P:endocardial cushion formation"/>
    <property type="evidence" value="ECO:0007669"/>
    <property type="project" value="Ensembl"/>
</dbReference>
<dbReference type="GO" id="GO:0060441">
    <property type="term" value="P:epithelial tube branching involved in lung morphogenesis"/>
    <property type="evidence" value="ECO:0007669"/>
    <property type="project" value="Ensembl"/>
</dbReference>
<dbReference type="GO" id="GO:0008543">
    <property type="term" value="P:fibroblast growth factor receptor signaling pathway"/>
    <property type="evidence" value="ECO:0007669"/>
    <property type="project" value="Ensembl"/>
</dbReference>
<dbReference type="GO" id="GO:0001947">
    <property type="term" value="P:heart looping"/>
    <property type="evidence" value="ECO:0000250"/>
    <property type="project" value="UniProtKB"/>
</dbReference>
<dbReference type="GO" id="GO:0060596">
    <property type="term" value="P:mammary placode formation"/>
    <property type="evidence" value="ECO:0007669"/>
    <property type="project" value="Ensembl"/>
</dbReference>
<dbReference type="GO" id="GO:0097325">
    <property type="term" value="P:melanocyte proliferation"/>
    <property type="evidence" value="ECO:0007669"/>
    <property type="project" value="Ensembl"/>
</dbReference>
<dbReference type="GO" id="GO:0060916">
    <property type="term" value="P:mesenchymal cell proliferation involved in lung development"/>
    <property type="evidence" value="ECO:0007669"/>
    <property type="project" value="Ensembl"/>
</dbReference>
<dbReference type="GO" id="GO:0007521">
    <property type="term" value="P:muscle cell fate determination"/>
    <property type="evidence" value="ECO:0007669"/>
    <property type="project" value="Ensembl"/>
</dbReference>
<dbReference type="GO" id="GO:1901211">
    <property type="term" value="P:negative regulation of cardiac chamber formation"/>
    <property type="evidence" value="ECO:0007669"/>
    <property type="project" value="Ensembl"/>
</dbReference>
<dbReference type="GO" id="GO:2000773">
    <property type="term" value="P:negative regulation of cellular senescence"/>
    <property type="evidence" value="ECO:0007669"/>
    <property type="project" value="Ensembl"/>
</dbReference>
<dbReference type="GO" id="GO:0045892">
    <property type="term" value="P:negative regulation of DNA-templated transcription"/>
    <property type="evidence" value="ECO:0000250"/>
    <property type="project" value="UniProtKB"/>
</dbReference>
<dbReference type="GO" id="GO:1901208">
    <property type="term" value="P:negative regulation of heart looping"/>
    <property type="evidence" value="ECO:0007669"/>
    <property type="project" value="Ensembl"/>
</dbReference>
<dbReference type="GO" id="GO:0022008">
    <property type="term" value="P:neurogenesis"/>
    <property type="evidence" value="ECO:0007669"/>
    <property type="project" value="Ensembl"/>
</dbReference>
<dbReference type="GO" id="GO:0007219">
    <property type="term" value="P:Notch signaling pathway"/>
    <property type="evidence" value="ECO:0007669"/>
    <property type="project" value="Ensembl"/>
</dbReference>
<dbReference type="GO" id="GO:0003148">
    <property type="term" value="P:outflow tract septum morphogenesis"/>
    <property type="evidence" value="ECO:0007669"/>
    <property type="project" value="Ensembl"/>
</dbReference>
<dbReference type="GO" id="GO:0060037">
    <property type="term" value="P:pharyngeal system development"/>
    <property type="evidence" value="ECO:0007669"/>
    <property type="project" value="Ensembl"/>
</dbReference>
<dbReference type="GO" id="GO:0043474">
    <property type="term" value="P:pigment metabolic process involved in pigmentation"/>
    <property type="evidence" value="ECO:0007669"/>
    <property type="project" value="Ensembl"/>
</dbReference>
<dbReference type="GO" id="GO:0060045">
    <property type="term" value="P:positive regulation of cardiac muscle cell proliferation"/>
    <property type="evidence" value="ECO:0007669"/>
    <property type="project" value="Ensembl"/>
</dbReference>
<dbReference type="GO" id="GO:1902808">
    <property type="term" value="P:positive regulation of cell cycle G1/S phase transition"/>
    <property type="evidence" value="ECO:0007669"/>
    <property type="project" value="Ensembl"/>
</dbReference>
<dbReference type="GO" id="GO:0045944">
    <property type="term" value="P:positive regulation of transcription by RNA polymerase II"/>
    <property type="evidence" value="ECO:0007669"/>
    <property type="project" value="Ensembl"/>
</dbReference>
<dbReference type="GO" id="GO:0008016">
    <property type="term" value="P:regulation of heart contraction"/>
    <property type="evidence" value="ECO:0000250"/>
    <property type="project" value="UniProtKB"/>
</dbReference>
<dbReference type="GO" id="GO:0032526">
    <property type="term" value="P:response to retinoic acid"/>
    <property type="evidence" value="ECO:0007669"/>
    <property type="project" value="Ensembl"/>
</dbReference>
<dbReference type="GO" id="GO:0060021">
    <property type="term" value="P:roof of mouth development"/>
    <property type="evidence" value="ECO:0007669"/>
    <property type="project" value="Ensembl"/>
</dbReference>
<dbReference type="GO" id="GO:0051145">
    <property type="term" value="P:smooth muscle cell differentiation"/>
    <property type="evidence" value="ECO:0007669"/>
    <property type="project" value="Ensembl"/>
</dbReference>
<dbReference type="GO" id="GO:0072105">
    <property type="term" value="P:ureteric peristalsis"/>
    <property type="evidence" value="ECO:0007669"/>
    <property type="project" value="Ensembl"/>
</dbReference>
<dbReference type="CDD" id="cd20188">
    <property type="entry name" value="T-box_TBX2_3-like"/>
    <property type="match status" value="1"/>
</dbReference>
<dbReference type="FunFam" id="2.60.40.820:FF:000003">
    <property type="entry name" value="T-box transcription factor TBX3"/>
    <property type="match status" value="1"/>
</dbReference>
<dbReference type="Gene3D" id="2.60.40.820">
    <property type="entry name" value="Transcription factor, T-box"/>
    <property type="match status" value="1"/>
</dbReference>
<dbReference type="InterPro" id="IPR008967">
    <property type="entry name" value="p53-like_TF_DNA-bd_sf"/>
</dbReference>
<dbReference type="InterPro" id="IPR046360">
    <property type="entry name" value="T-box_DNA-bd"/>
</dbReference>
<dbReference type="InterPro" id="IPR036960">
    <property type="entry name" value="T-box_sf"/>
</dbReference>
<dbReference type="InterPro" id="IPR022582">
    <property type="entry name" value="TBX2/3_TAD"/>
</dbReference>
<dbReference type="InterPro" id="IPR048387">
    <property type="entry name" value="TBX2_3_RD"/>
</dbReference>
<dbReference type="InterPro" id="IPR002070">
    <property type="entry name" value="TF_Brachyury"/>
</dbReference>
<dbReference type="InterPro" id="IPR001699">
    <property type="entry name" value="TF_T-box"/>
</dbReference>
<dbReference type="InterPro" id="IPR018186">
    <property type="entry name" value="TF_T-box_CS"/>
</dbReference>
<dbReference type="PANTHER" id="PTHR11267">
    <property type="entry name" value="T-BOX PROTEIN-RELATED"/>
    <property type="match status" value="1"/>
</dbReference>
<dbReference type="PANTHER" id="PTHR11267:SF82">
    <property type="entry name" value="T-BOX TRANSCRIPTION FACTOR TBX2"/>
    <property type="match status" value="1"/>
</dbReference>
<dbReference type="Pfam" id="PF00907">
    <property type="entry name" value="T-box"/>
    <property type="match status" value="1"/>
</dbReference>
<dbReference type="Pfam" id="PF20627">
    <property type="entry name" value="TBX2-3_RD"/>
    <property type="match status" value="1"/>
</dbReference>
<dbReference type="Pfam" id="PF12598">
    <property type="entry name" value="TBX2-3_TAD"/>
    <property type="match status" value="1"/>
</dbReference>
<dbReference type="PRINTS" id="PR00938">
    <property type="entry name" value="BRACHYURY"/>
</dbReference>
<dbReference type="PRINTS" id="PR00937">
    <property type="entry name" value="TBOX"/>
</dbReference>
<dbReference type="SMART" id="SM00425">
    <property type="entry name" value="TBOX"/>
    <property type="match status" value="1"/>
</dbReference>
<dbReference type="SUPFAM" id="SSF49417">
    <property type="entry name" value="p53-like transcription factors"/>
    <property type="match status" value="1"/>
</dbReference>
<dbReference type="PROSITE" id="PS01283">
    <property type="entry name" value="TBOX_1"/>
    <property type="match status" value="1"/>
</dbReference>
<dbReference type="PROSITE" id="PS01264">
    <property type="entry name" value="TBOX_2"/>
    <property type="match status" value="1"/>
</dbReference>
<dbReference type="PROSITE" id="PS50252">
    <property type="entry name" value="TBOX_3"/>
    <property type="match status" value="1"/>
</dbReference>